<organism>
    <name type="scientific">Vitis vinifera</name>
    <name type="common">Grape</name>
    <dbReference type="NCBI Taxonomy" id="29760"/>
    <lineage>
        <taxon>Eukaryota</taxon>
        <taxon>Viridiplantae</taxon>
        <taxon>Streptophyta</taxon>
        <taxon>Embryophyta</taxon>
        <taxon>Tracheophyta</taxon>
        <taxon>Spermatophyta</taxon>
        <taxon>Magnoliopsida</taxon>
        <taxon>eudicotyledons</taxon>
        <taxon>Gunneridae</taxon>
        <taxon>Pentapetalae</taxon>
        <taxon>rosids</taxon>
        <taxon>Vitales</taxon>
        <taxon>Vitaceae</taxon>
        <taxon>Viteae</taxon>
        <taxon>Vitis</taxon>
    </lineage>
</organism>
<evidence type="ECO:0000255" key="1">
    <source>
        <dbReference type="HAMAP-Rule" id="MF_00059"/>
    </source>
</evidence>
<keyword id="KW-0150">Chloroplast</keyword>
<keyword id="KW-0240">DNA-directed RNA polymerase</keyword>
<keyword id="KW-0548">Nucleotidyltransferase</keyword>
<keyword id="KW-0934">Plastid</keyword>
<keyword id="KW-1185">Reference proteome</keyword>
<keyword id="KW-0804">Transcription</keyword>
<keyword id="KW-0808">Transferase</keyword>
<protein>
    <recommendedName>
        <fullName evidence="1">DNA-directed RNA polymerase subunit alpha</fullName>
        <shortName evidence="1">PEP</shortName>
        <ecNumber evidence="1">2.7.7.6</ecNumber>
    </recommendedName>
    <alternativeName>
        <fullName evidence="1">Plastid-encoded RNA polymerase subunit alpha</fullName>
        <shortName evidence="1">RNA polymerase subunit alpha</shortName>
    </alternativeName>
</protein>
<dbReference type="EC" id="2.7.7.6" evidence="1"/>
<dbReference type="EMBL" id="DQ424856">
    <property type="protein sequence ID" value="ABE47565.1"/>
    <property type="molecule type" value="Genomic_DNA"/>
</dbReference>
<dbReference type="RefSeq" id="YP_567109.1">
    <property type="nucleotide sequence ID" value="NC_007957.1"/>
</dbReference>
<dbReference type="SMR" id="Q0ZIY7"/>
<dbReference type="FunCoup" id="Q0ZIY7">
    <property type="interactions" value="137"/>
</dbReference>
<dbReference type="STRING" id="29760.Q0ZIY7"/>
<dbReference type="GeneID" id="4025131"/>
<dbReference type="KEGG" id="vvi:4025131"/>
<dbReference type="InParanoid" id="Q0ZIY7"/>
<dbReference type="OrthoDB" id="777556at71240"/>
<dbReference type="Proteomes" id="UP000009183">
    <property type="component" value="Chloroplast"/>
</dbReference>
<dbReference type="ExpressionAtlas" id="Q0ZIY7">
    <property type="expression patterns" value="baseline"/>
</dbReference>
<dbReference type="GO" id="GO:0009507">
    <property type="term" value="C:chloroplast"/>
    <property type="evidence" value="ECO:0007669"/>
    <property type="project" value="UniProtKB-SubCell"/>
</dbReference>
<dbReference type="GO" id="GO:0000428">
    <property type="term" value="C:DNA-directed RNA polymerase complex"/>
    <property type="evidence" value="ECO:0007669"/>
    <property type="project" value="UniProtKB-KW"/>
</dbReference>
<dbReference type="GO" id="GO:0005739">
    <property type="term" value="C:mitochondrion"/>
    <property type="evidence" value="ECO:0007669"/>
    <property type="project" value="GOC"/>
</dbReference>
<dbReference type="GO" id="GO:0003677">
    <property type="term" value="F:DNA binding"/>
    <property type="evidence" value="ECO:0007669"/>
    <property type="project" value="UniProtKB-UniRule"/>
</dbReference>
<dbReference type="GO" id="GO:0003899">
    <property type="term" value="F:DNA-directed RNA polymerase activity"/>
    <property type="evidence" value="ECO:0007669"/>
    <property type="project" value="UniProtKB-UniRule"/>
</dbReference>
<dbReference type="GO" id="GO:0046983">
    <property type="term" value="F:protein dimerization activity"/>
    <property type="evidence" value="ECO:0007669"/>
    <property type="project" value="InterPro"/>
</dbReference>
<dbReference type="GO" id="GO:0006351">
    <property type="term" value="P:DNA-templated transcription"/>
    <property type="evidence" value="ECO:0007669"/>
    <property type="project" value="UniProtKB-UniRule"/>
</dbReference>
<dbReference type="CDD" id="cd06928">
    <property type="entry name" value="RNAP_alpha_NTD"/>
    <property type="match status" value="1"/>
</dbReference>
<dbReference type="FunFam" id="1.10.150.20:FF:000021">
    <property type="entry name" value="DNA-directed RNA polymerase subunit alpha"/>
    <property type="match status" value="1"/>
</dbReference>
<dbReference type="FunFam" id="2.170.120.12:FF:000001">
    <property type="entry name" value="DNA-directed RNA polymerase subunit alpha"/>
    <property type="match status" value="1"/>
</dbReference>
<dbReference type="FunFam" id="3.30.1360.10:FF:000039">
    <property type="entry name" value="DNA-directed RNA polymerase subunit alpha"/>
    <property type="match status" value="1"/>
</dbReference>
<dbReference type="Gene3D" id="1.10.150.20">
    <property type="entry name" value="5' to 3' exonuclease, C-terminal subdomain"/>
    <property type="match status" value="1"/>
</dbReference>
<dbReference type="Gene3D" id="2.170.120.12">
    <property type="entry name" value="DNA-directed RNA polymerase, insert domain"/>
    <property type="match status" value="1"/>
</dbReference>
<dbReference type="Gene3D" id="3.30.1360.10">
    <property type="entry name" value="RNA polymerase, RBP11-like subunit"/>
    <property type="match status" value="1"/>
</dbReference>
<dbReference type="HAMAP" id="MF_00059">
    <property type="entry name" value="RNApol_bact_RpoA"/>
    <property type="match status" value="1"/>
</dbReference>
<dbReference type="InterPro" id="IPR011262">
    <property type="entry name" value="DNA-dir_RNA_pol_insert"/>
</dbReference>
<dbReference type="InterPro" id="IPR011263">
    <property type="entry name" value="DNA-dir_RNA_pol_RpoA/D/Rpb3"/>
</dbReference>
<dbReference type="InterPro" id="IPR011773">
    <property type="entry name" value="DNA-dir_RpoA"/>
</dbReference>
<dbReference type="InterPro" id="IPR036603">
    <property type="entry name" value="RBP11-like"/>
</dbReference>
<dbReference type="InterPro" id="IPR011260">
    <property type="entry name" value="RNAP_asu_C"/>
</dbReference>
<dbReference type="InterPro" id="IPR036643">
    <property type="entry name" value="RNApol_insert_sf"/>
</dbReference>
<dbReference type="NCBIfam" id="TIGR02027">
    <property type="entry name" value="rpoA"/>
    <property type="match status" value="1"/>
</dbReference>
<dbReference type="Pfam" id="PF01000">
    <property type="entry name" value="RNA_pol_A_bac"/>
    <property type="match status" value="1"/>
</dbReference>
<dbReference type="Pfam" id="PF03118">
    <property type="entry name" value="RNA_pol_A_CTD"/>
    <property type="match status" value="1"/>
</dbReference>
<dbReference type="Pfam" id="PF01193">
    <property type="entry name" value="RNA_pol_L"/>
    <property type="match status" value="1"/>
</dbReference>
<dbReference type="SMART" id="SM00662">
    <property type="entry name" value="RPOLD"/>
    <property type="match status" value="1"/>
</dbReference>
<dbReference type="SUPFAM" id="SSF47789">
    <property type="entry name" value="C-terminal domain of RNA polymerase alpha subunit"/>
    <property type="match status" value="1"/>
</dbReference>
<dbReference type="SUPFAM" id="SSF56553">
    <property type="entry name" value="Insert subdomain of RNA polymerase alpha subunit"/>
    <property type="match status" value="1"/>
</dbReference>
<dbReference type="SUPFAM" id="SSF55257">
    <property type="entry name" value="RBP11-like subunits of RNA polymerase"/>
    <property type="match status" value="1"/>
</dbReference>
<geneLocation type="chloroplast"/>
<sequence>MVREKVTVSTRTLQWKCVESRVDNKRLCYGRFILSPLIKGQADTIGIAMRRALLGEIEGTCITRAKSEKIPHEYSTIVGIQESVHEILMNLKEIVLRSNLYGTRGAFICARGPGYVTAQDIISPPSVEIVDNTQHIARLMEPIDLCIGLQIERNRGYSIKRPNNFQDGSYPIDAVFMPVRNANHSIHSYGNGNERQEILFLEIWTNGSLTPKEALHEASRNLIDLFIPFLHAEEETLHLEYNQHKSTLPPLTFHDRLAKLRKNKKEIELKYIFIDQLELPPRIYNCLKRSNIHTLLDLLNKSQKDLMKIEDFRIEDVKQLLGILEKHFTID</sequence>
<reference key="1">
    <citation type="journal article" date="2006" name="BMC Evol. Biol.">
        <title>Phylogenetic analyses of Vitis (Vitaceae) based on complete chloroplast genome sequences: effects of taxon sampling and phylogenetic methods on resolving relationships among rosids.</title>
        <authorList>
            <person name="Jansen R.K."/>
            <person name="Kaittanis C."/>
            <person name="Lee S.-B."/>
            <person name="Saski C."/>
            <person name="Tomkins J."/>
            <person name="Alverson A.J."/>
            <person name="Daniell H."/>
        </authorList>
    </citation>
    <scope>NUCLEOTIDE SEQUENCE [LARGE SCALE GENOMIC DNA]</scope>
    <source>
        <strain>cv. Maxxa</strain>
    </source>
</reference>
<accession>Q0ZIY7</accession>
<feature type="chain" id="PRO_0000275696" description="DNA-directed RNA polymerase subunit alpha">
    <location>
        <begin position="1"/>
        <end position="331"/>
    </location>
</feature>
<feature type="region of interest" description="Alpha N-terminal domain (alpha-NTD)" evidence="1">
    <location>
        <begin position="1"/>
        <end position="233"/>
    </location>
</feature>
<feature type="region of interest" description="Alpha C-terminal domain (alpha-CTD)" evidence="1">
    <location>
        <begin position="265"/>
        <end position="331"/>
    </location>
</feature>
<proteinExistence type="inferred from homology"/>
<comment type="function">
    <text evidence="1">DNA-dependent RNA polymerase catalyzes the transcription of DNA into RNA using the four ribonucleoside triphosphates as substrates.</text>
</comment>
<comment type="catalytic activity">
    <reaction evidence="1">
        <text>RNA(n) + a ribonucleoside 5'-triphosphate = RNA(n+1) + diphosphate</text>
        <dbReference type="Rhea" id="RHEA:21248"/>
        <dbReference type="Rhea" id="RHEA-COMP:14527"/>
        <dbReference type="Rhea" id="RHEA-COMP:17342"/>
        <dbReference type="ChEBI" id="CHEBI:33019"/>
        <dbReference type="ChEBI" id="CHEBI:61557"/>
        <dbReference type="ChEBI" id="CHEBI:140395"/>
        <dbReference type="EC" id="2.7.7.6"/>
    </reaction>
</comment>
<comment type="subunit">
    <text evidence="1">In plastids the minimal PEP RNA polymerase catalytic core is composed of four subunits: alpha, beta, beta', and beta''. When a (nuclear-encoded) sigma factor is associated with the core the holoenzyme is formed, which can initiate transcription.</text>
</comment>
<comment type="subcellular location">
    <subcellularLocation>
        <location>Plastid</location>
        <location>Chloroplast</location>
    </subcellularLocation>
</comment>
<comment type="domain">
    <text evidence="1">The N-terminal domain is essential for RNAP assembly and basal transcription, whereas the C-terminal domain is involved in interaction with transcriptional regulators and with upstream promoter elements.</text>
</comment>
<comment type="similarity">
    <text evidence="1">Belongs to the RNA polymerase alpha chain family.</text>
</comment>
<name>RPOA_VITVI</name>
<gene>
    <name evidence="1" type="primary">rpoA</name>
</gene>